<proteinExistence type="inferred from homology"/>
<name>COX1_GEOTE</name>
<feature type="chain" id="PRO_0000183338" description="Cytochrome c oxidase subunit 1">
    <location>
        <begin position="1"/>
        <end position="516"/>
    </location>
</feature>
<feature type="topological domain" description="Mitochondrial matrix" evidence="2">
    <location>
        <begin position="1"/>
        <end position="11"/>
    </location>
</feature>
<feature type="transmembrane region" description="Helical; Name=I" evidence="2">
    <location>
        <begin position="12"/>
        <end position="40"/>
    </location>
</feature>
<feature type="topological domain" description="Mitochondrial intermembrane" evidence="2">
    <location>
        <begin position="41"/>
        <end position="50"/>
    </location>
</feature>
<feature type="transmembrane region" description="Helical; Name=II" evidence="2">
    <location>
        <begin position="51"/>
        <end position="86"/>
    </location>
</feature>
<feature type="topological domain" description="Mitochondrial matrix" evidence="2">
    <location>
        <begin position="87"/>
        <end position="94"/>
    </location>
</feature>
<feature type="transmembrane region" description="Helical; Name=III" evidence="2">
    <location>
        <begin position="95"/>
        <end position="117"/>
    </location>
</feature>
<feature type="topological domain" description="Mitochondrial intermembrane" evidence="2">
    <location>
        <begin position="118"/>
        <end position="140"/>
    </location>
</feature>
<feature type="transmembrane region" description="Helical; Name=IV" evidence="2">
    <location>
        <begin position="141"/>
        <end position="170"/>
    </location>
</feature>
<feature type="topological domain" description="Mitochondrial matrix" evidence="2">
    <location>
        <begin position="171"/>
        <end position="182"/>
    </location>
</feature>
<feature type="transmembrane region" description="Helical; Name=V" evidence="2">
    <location>
        <begin position="183"/>
        <end position="212"/>
    </location>
</feature>
<feature type="topological domain" description="Mitochondrial intermembrane" evidence="2">
    <location>
        <begin position="213"/>
        <end position="227"/>
    </location>
</feature>
<feature type="transmembrane region" description="Helical; Name=VI" evidence="2">
    <location>
        <begin position="228"/>
        <end position="261"/>
    </location>
</feature>
<feature type="topological domain" description="Mitochondrial matrix" evidence="2">
    <location>
        <begin position="262"/>
        <end position="269"/>
    </location>
</feature>
<feature type="transmembrane region" description="Helical; Name=VII" evidence="2">
    <location>
        <begin position="270"/>
        <end position="286"/>
    </location>
</feature>
<feature type="topological domain" description="Mitochondrial intermembrane" evidence="2">
    <location>
        <begin position="287"/>
        <end position="298"/>
    </location>
</feature>
<feature type="transmembrane region" description="Helical; Name=VIII" evidence="2">
    <location>
        <begin position="299"/>
        <end position="327"/>
    </location>
</feature>
<feature type="topological domain" description="Mitochondrial matrix" evidence="2">
    <location>
        <begin position="328"/>
        <end position="335"/>
    </location>
</feature>
<feature type="transmembrane region" description="Helical; Name=IX" evidence="2">
    <location>
        <begin position="336"/>
        <end position="357"/>
    </location>
</feature>
<feature type="topological domain" description="Mitochondrial intermembrane" evidence="2">
    <location>
        <begin position="358"/>
        <end position="370"/>
    </location>
</feature>
<feature type="transmembrane region" description="Helical; Name=X" evidence="2">
    <location>
        <begin position="371"/>
        <end position="400"/>
    </location>
</feature>
<feature type="topological domain" description="Mitochondrial matrix" evidence="2">
    <location>
        <begin position="401"/>
        <end position="406"/>
    </location>
</feature>
<feature type="transmembrane region" description="Helical; Name=XI" evidence="2">
    <location>
        <begin position="407"/>
        <end position="433"/>
    </location>
</feature>
<feature type="topological domain" description="Mitochondrial intermembrane" evidence="2">
    <location>
        <begin position="434"/>
        <end position="446"/>
    </location>
</feature>
<feature type="transmembrane region" description="Helical; Name=XII" evidence="2">
    <location>
        <begin position="447"/>
        <end position="478"/>
    </location>
</feature>
<feature type="topological domain" description="Mitochondrial matrix" evidence="2">
    <location>
        <begin position="479"/>
        <end position="516"/>
    </location>
</feature>
<feature type="binding site" evidence="2">
    <location>
        <position position="40"/>
    </location>
    <ligand>
        <name>Na(+)</name>
        <dbReference type="ChEBI" id="CHEBI:29101"/>
    </ligand>
</feature>
<feature type="binding site" evidence="2">
    <location>
        <position position="45"/>
    </location>
    <ligand>
        <name>Na(+)</name>
        <dbReference type="ChEBI" id="CHEBI:29101"/>
    </ligand>
</feature>
<feature type="binding site" description="axial binding residue" evidence="2">
    <location>
        <position position="61"/>
    </location>
    <ligand>
        <name>Fe(II)-heme a</name>
        <dbReference type="ChEBI" id="CHEBI:61715"/>
        <note>low-spin</note>
    </ligand>
    <ligandPart>
        <name>Fe</name>
        <dbReference type="ChEBI" id="CHEBI:18248"/>
    </ligandPart>
</feature>
<feature type="binding site" evidence="2">
    <location>
        <position position="240"/>
    </location>
    <ligand>
        <name>Cu cation</name>
        <dbReference type="ChEBI" id="CHEBI:23378"/>
        <label>B</label>
    </ligand>
</feature>
<feature type="binding site" evidence="2">
    <location>
        <position position="244"/>
    </location>
    <ligand>
        <name>O2</name>
        <dbReference type="ChEBI" id="CHEBI:15379"/>
    </ligand>
</feature>
<feature type="binding site" evidence="2">
    <location>
        <position position="290"/>
    </location>
    <ligand>
        <name>Cu cation</name>
        <dbReference type="ChEBI" id="CHEBI:23378"/>
        <label>B</label>
    </ligand>
</feature>
<feature type="binding site" evidence="2">
    <location>
        <position position="291"/>
    </location>
    <ligand>
        <name>Cu cation</name>
        <dbReference type="ChEBI" id="CHEBI:23378"/>
        <label>B</label>
    </ligand>
</feature>
<feature type="binding site" evidence="2">
    <location>
        <position position="368"/>
    </location>
    <ligand>
        <name>Mg(2+)</name>
        <dbReference type="ChEBI" id="CHEBI:18420"/>
        <note>ligand shared with MT-CO2</note>
    </ligand>
</feature>
<feature type="binding site" evidence="2">
    <location>
        <position position="369"/>
    </location>
    <ligand>
        <name>Mg(2+)</name>
        <dbReference type="ChEBI" id="CHEBI:18420"/>
        <note>ligand shared with MT-CO2</note>
    </ligand>
</feature>
<feature type="binding site" description="axial binding residue" evidence="2">
    <location>
        <position position="376"/>
    </location>
    <ligand>
        <name>heme a3</name>
        <dbReference type="ChEBI" id="CHEBI:83282"/>
        <note>high-spin</note>
    </ligand>
    <ligandPart>
        <name>Fe</name>
        <dbReference type="ChEBI" id="CHEBI:18248"/>
    </ligandPart>
</feature>
<feature type="binding site" description="axial binding residue" evidence="2">
    <location>
        <position position="378"/>
    </location>
    <ligand>
        <name>Fe(II)-heme a</name>
        <dbReference type="ChEBI" id="CHEBI:61715"/>
        <note>low-spin</note>
    </ligand>
    <ligandPart>
        <name>Fe</name>
        <dbReference type="ChEBI" id="CHEBI:18248"/>
    </ligandPart>
</feature>
<feature type="binding site" evidence="2">
    <location>
        <position position="441"/>
    </location>
    <ligand>
        <name>Na(+)</name>
        <dbReference type="ChEBI" id="CHEBI:29101"/>
    </ligand>
</feature>
<feature type="cross-link" description="1'-histidyl-3'-tyrosine (His-Tyr)" evidence="2">
    <location>
        <begin position="240"/>
        <end position="244"/>
    </location>
</feature>
<evidence type="ECO:0000250" key="1">
    <source>
        <dbReference type="UniProtKB" id="P00395"/>
    </source>
</evidence>
<evidence type="ECO:0000250" key="2">
    <source>
        <dbReference type="UniProtKB" id="P00396"/>
    </source>
</evidence>
<evidence type="ECO:0000250" key="3">
    <source>
        <dbReference type="UniProtKB" id="P00401"/>
    </source>
</evidence>
<evidence type="ECO:0000305" key="4"/>
<comment type="function">
    <text evidence="3">Component of the cytochrome c oxidase, the last enzyme in the mitochondrial electron transport chain which drives oxidative phosphorylation. The respiratory chain contains 3 multisubunit complexes succinate dehydrogenase (complex II, CII), ubiquinol-cytochrome c oxidoreductase (cytochrome b-c1 complex, complex III, CIII) and cytochrome c oxidase (complex IV, CIV), that cooperate to transfer electrons derived from NADH and succinate to molecular oxygen, creating an electrochemical gradient over the inner membrane that drives transmembrane transport and the ATP synthase. Cytochrome c oxidase is the component of the respiratory chain that catalyzes the reduction of oxygen to water. Electrons originating from reduced cytochrome c in the intermembrane space (IMS) are transferred via the dinuclear copper A center (CU(A)) of subunit 2 and heme A of subunit 1 to the active site in subunit 1, a binuclear center (BNC) formed by heme A3 and copper B (CU(B)). The BNC reduces molecular oxygen to 2 water molecules using 4 electrons from cytochrome c in the IMS and 4 protons from the mitochondrial matrix.</text>
</comment>
<comment type="catalytic activity">
    <reaction evidence="3">
        <text>4 Fe(II)-[cytochrome c] + O2 + 8 H(+)(in) = 4 Fe(III)-[cytochrome c] + 2 H2O + 4 H(+)(out)</text>
        <dbReference type="Rhea" id="RHEA:11436"/>
        <dbReference type="Rhea" id="RHEA-COMP:10350"/>
        <dbReference type="Rhea" id="RHEA-COMP:14399"/>
        <dbReference type="ChEBI" id="CHEBI:15377"/>
        <dbReference type="ChEBI" id="CHEBI:15378"/>
        <dbReference type="ChEBI" id="CHEBI:15379"/>
        <dbReference type="ChEBI" id="CHEBI:29033"/>
        <dbReference type="ChEBI" id="CHEBI:29034"/>
        <dbReference type="EC" id="7.1.1.9"/>
    </reaction>
    <physiologicalReaction direction="left-to-right" evidence="3">
        <dbReference type="Rhea" id="RHEA:11437"/>
    </physiologicalReaction>
</comment>
<comment type="cofactor">
    <cofactor evidence="2">
        <name>heme</name>
        <dbReference type="ChEBI" id="CHEBI:30413"/>
    </cofactor>
    <text evidence="2">Binds 2 heme A groups non-covalently per subunit.</text>
</comment>
<comment type="cofactor">
    <cofactor evidence="2">
        <name>Cu cation</name>
        <dbReference type="ChEBI" id="CHEBI:23378"/>
    </cofactor>
    <text evidence="2">Binds a copper B center.</text>
</comment>
<comment type="pathway">
    <text evidence="3">Energy metabolism; oxidative phosphorylation.</text>
</comment>
<comment type="subunit">
    <text evidence="1 2">Component of the cytochrome c oxidase (complex IV, CIV), a multisubunit enzyme composed of 14 subunits. The complex is composed of a catalytic core of 3 subunits MT-CO1, MT-CO2 and MT-CO3, encoded in the mitochondrial DNA, and 11 supernumerary subunits COX4I, COX5A, COX5B, COX6A, COX6B, COX6C, COX7A, COX7B, COX7C, COX8 and NDUFA4, which are encoded in the nuclear genome. The complex exists as a monomer or a dimer and forms supercomplexes (SCs) in the inner mitochondrial membrane with NADH-ubiquinone oxidoreductase (complex I, CI) and ubiquinol-cytochrome c oxidoreductase (cytochrome b-c1 complex, complex III, CIII), resulting in different assemblies (supercomplex SCI(1)III(2)IV(1) and megacomplex MCI(2)III(2)IV(2)) (By similarity). As a newly synthesized protein, rapidly incorporates into a multi-subunit assembly intermediate in the inner membrane, called MITRAC (mitochondrial translation regulation assembly intermediate of cytochrome c oxidase) complex, whose core components are COA3/MITRAC12 and COX14. Within the MITRAC complex, interacts with COA3 and with SMIM20/MITRAC7; the interaction with SMIM20 stabilizes the newly synthesized MT-CO1 and prevents its premature turnover. Interacts with TMEM177 in a COX20-dependent manner (By similarity).</text>
</comment>
<comment type="subcellular location">
    <subcellularLocation>
        <location evidence="2">Mitochondrion inner membrane</location>
        <topology evidence="2">Multi-pass membrane protein</topology>
    </subcellularLocation>
</comment>
<comment type="similarity">
    <text evidence="4">Belongs to the heme-copper respiratory oxidase family.</text>
</comment>
<sequence>MFINRWLFSTNHKDIGTLYMIFGAWAGMVGTGLSILIRAELGQPGSLLGDDQIYNVVVTAHAFVMIFFMVMPIMIGGFGNWLVPLMIGAPDMAFPRMNNMSFWLLPPSFLLLLASSMVEAGAGTGWTVYPPLAGNLAHAGASVDLTIFSLHLAGVSSILGAINFITTIINMKPPAITQYQTPLFVWSVMITAVLLLLSLPVLAAGITMLLTDRNLNTTFFDPAGGGDPILYQHLFWFFGHPEVYILILPGFGMISHIVTYYSGKKEPFGYMGMVWAMMSIGFLGFIVWAHHMFTVGMDVDTRAYFTSATMIIAIPTGVKVFSWLATLHGGNIKWSPAMLWALGFIFLFTIGGLTGIVLSNSSLDIVLHDTYYVVAHFHYVLSMGAVFAIMGGFVHWFPLFTGYTLNDTWAKIHFTIMFVGVNMTFFPQHFLGLAGMPRRYSDYPDAYTTWNTISSMGSFISLTAVILMVYMIWEALASKRLVKSVPLTTTNLEWMHGCPPPFHTFEEPVFIKSPQL</sequence>
<organism>
    <name type="scientific">Geomys texensis</name>
    <name type="common">Llano pocket gopher</name>
    <dbReference type="NCBI Taxonomy" id="72448"/>
    <lineage>
        <taxon>Eukaryota</taxon>
        <taxon>Metazoa</taxon>
        <taxon>Chordata</taxon>
        <taxon>Craniata</taxon>
        <taxon>Vertebrata</taxon>
        <taxon>Euteleostomi</taxon>
        <taxon>Mammalia</taxon>
        <taxon>Eutheria</taxon>
        <taxon>Euarchontoglires</taxon>
        <taxon>Glires</taxon>
        <taxon>Rodentia</taxon>
        <taxon>Castorimorpha</taxon>
        <taxon>Geomyidae</taxon>
        <taxon>Geomys</taxon>
    </lineage>
</organism>
<keyword id="KW-0106">Calcium</keyword>
<keyword id="KW-0186">Copper</keyword>
<keyword id="KW-0249">Electron transport</keyword>
<keyword id="KW-0349">Heme</keyword>
<keyword id="KW-0408">Iron</keyword>
<keyword id="KW-0460">Magnesium</keyword>
<keyword id="KW-0472">Membrane</keyword>
<keyword id="KW-0479">Metal-binding</keyword>
<keyword id="KW-0496">Mitochondrion</keyword>
<keyword id="KW-0999">Mitochondrion inner membrane</keyword>
<keyword id="KW-0679">Respiratory chain</keyword>
<keyword id="KW-0915">Sodium</keyword>
<keyword id="KW-1278">Translocase</keyword>
<keyword id="KW-0812">Transmembrane</keyword>
<keyword id="KW-1133">Transmembrane helix</keyword>
<keyword id="KW-0813">Transport</keyword>
<geneLocation type="mitochondrion"/>
<protein>
    <recommendedName>
        <fullName>Cytochrome c oxidase subunit 1</fullName>
        <ecNumber>7.1.1.9</ecNumber>
    </recommendedName>
    <alternativeName>
        <fullName>Cytochrome c oxidase polypeptide I</fullName>
    </alternativeName>
</protein>
<reference key="1">
    <citation type="journal article" date="2004" name="J. Mammal. Evol.">
        <title>DNA data support a rapid radiation of pocket gopher genera.</title>
        <authorList>
            <person name="Spradling T.A."/>
            <person name="Brant S.V."/>
            <person name="Hafner M.S."/>
            <person name="Dickerson C.J."/>
        </authorList>
    </citation>
    <scope>NUCLEOTIDE SEQUENCE [GENOMIC DNA]</scope>
</reference>
<dbReference type="EC" id="7.1.1.9"/>
<dbReference type="EMBL" id="AY331086">
    <property type="protein sequence ID" value="AAR02587.1"/>
    <property type="molecule type" value="Genomic_DNA"/>
</dbReference>
<dbReference type="SMR" id="Q6EGH8"/>
<dbReference type="UniPathway" id="UPA00705"/>
<dbReference type="GO" id="GO:0005743">
    <property type="term" value="C:mitochondrial inner membrane"/>
    <property type="evidence" value="ECO:0007669"/>
    <property type="project" value="UniProtKB-SubCell"/>
</dbReference>
<dbReference type="GO" id="GO:0045277">
    <property type="term" value="C:respiratory chain complex IV"/>
    <property type="evidence" value="ECO:0000250"/>
    <property type="project" value="UniProtKB"/>
</dbReference>
<dbReference type="GO" id="GO:0004129">
    <property type="term" value="F:cytochrome-c oxidase activity"/>
    <property type="evidence" value="ECO:0007669"/>
    <property type="project" value="UniProtKB-EC"/>
</dbReference>
<dbReference type="GO" id="GO:0020037">
    <property type="term" value="F:heme binding"/>
    <property type="evidence" value="ECO:0007669"/>
    <property type="project" value="InterPro"/>
</dbReference>
<dbReference type="GO" id="GO:0046872">
    <property type="term" value="F:metal ion binding"/>
    <property type="evidence" value="ECO:0007669"/>
    <property type="project" value="UniProtKB-KW"/>
</dbReference>
<dbReference type="GO" id="GO:0015990">
    <property type="term" value="P:electron transport coupled proton transport"/>
    <property type="evidence" value="ECO:0007669"/>
    <property type="project" value="TreeGrafter"/>
</dbReference>
<dbReference type="GO" id="GO:0006123">
    <property type="term" value="P:mitochondrial electron transport, cytochrome c to oxygen"/>
    <property type="evidence" value="ECO:0007669"/>
    <property type="project" value="TreeGrafter"/>
</dbReference>
<dbReference type="CDD" id="cd01663">
    <property type="entry name" value="Cyt_c_Oxidase_I"/>
    <property type="match status" value="1"/>
</dbReference>
<dbReference type="FunFam" id="1.20.210.10:FF:000001">
    <property type="entry name" value="Cytochrome c oxidase subunit 1"/>
    <property type="match status" value="1"/>
</dbReference>
<dbReference type="Gene3D" id="1.20.210.10">
    <property type="entry name" value="Cytochrome c oxidase-like, subunit I domain"/>
    <property type="match status" value="1"/>
</dbReference>
<dbReference type="InterPro" id="IPR023616">
    <property type="entry name" value="Cyt_c_oxase-like_su1_dom"/>
</dbReference>
<dbReference type="InterPro" id="IPR036927">
    <property type="entry name" value="Cyt_c_oxase-like_su1_sf"/>
</dbReference>
<dbReference type="InterPro" id="IPR000883">
    <property type="entry name" value="Cyt_C_Oxase_1"/>
</dbReference>
<dbReference type="InterPro" id="IPR023615">
    <property type="entry name" value="Cyt_c_Oxase_su1_BS"/>
</dbReference>
<dbReference type="InterPro" id="IPR033944">
    <property type="entry name" value="Cyt_c_oxase_su1_dom"/>
</dbReference>
<dbReference type="PANTHER" id="PTHR10422">
    <property type="entry name" value="CYTOCHROME C OXIDASE SUBUNIT 1"/>
    <property type="match status" value="1"/>
</dbReference>
<dbReference type="PANTHER" id="PTHR10422:SF18">
    <property type="entry name" value="CYTOCHROME C OXIDASE SUBUNIT 1"/>
    <property type="match status" value="1"/>
</dbReference>
<dbReference type="Pfam" id="PF00115">
    <property type="entry name" value="COX1"/>
    <property type="match status" value="1"/>
</dbReference>
<dbReference type="PRINTS" id="PR01165">
    <property type="entry name" value="CYCOXIDASEI"/>
</dbReference>
<dbReference type="SUPFAM" id="SSF81442">
    <property type="entry name" value="Cytochrome c oxidase subunit I-like"/>
    <property type="match status" value="1"/>
</dbReference>
<dbReference type="PROSITE" id="PS50855">
    <property type="entry name" value="COX1"/>
    <property type="match status" value="1"/>
</dbReference>
<dbReference type="PROSITE" id="PS00077">
    <property type="entry name" value="COX1_CUB"/>
    <property type="match status" value="1"/>
</dbReference>
<accession>Q6EGH8</accession>
<gene>
    <name type="primary">MT-CO1</name>
    <name type="synonym">COI</name>
    <name type="synonym">COXI</name>
    <name type="synonym">MTCO1</name>
</gene>